<organism>
    <name type="scientific">Crotalus adamanteus</name>
    <name type="common">Eastern diamondback rattlesnake</name>
    <dbReference type="NCBI Taxonomy" id="8729"/>
    <lineage>
        <taxon>Eukaryota</taxon>
        <taxon>Metazoa</taxon>
        <taxon>Chordata</taxon>
        <taxon>Craniata</taxon>
        <taxon>Vertebrata</taxon>
        <taxon>Euteleostomi</taxon>
        <taxon>Lepidosauria</taxon>
        <taxon>Squamata</taxon>
        <taxon>Bifurcata</taxon>
        <taxon>Unidentata</taxon>
        <taxon>Episquamata</taxon>
        <taxon>Toxicofera</taxon>
        <taxon>Serpentes</taxon>
        <taxon>Colubroidea</taxon>
        <taxon>Viperidae</taxon>
        <taxon>Crotalinae</taxon>
        <taxon>Crotalus</taxon>
    </lineage>
</organism>
<comment type="function">
    <text evidence="2">Hydrolyzes ADP with high activity. Shows weak or no activity on 5'-AMP, 5'-GMP, 3'-AMP, ATP, cAMP, and cGMP. Is devoid of monophosphatase and proteinase activities. Dose-dependently inhibits platelet aggregation induced by ADP (IC(50)=0.99 uM) and collagen (IC(50)=1.4 uM).</text>
</comment>
<comment type="catalytic activity">
    <reaction evidence="2">
        <text>ADP + H2O = AMP + phosphate + H(+)</text>
        <dbReference type="Rhea" id="RHEA:61436"/>
        <dbReference type="ChEBI" id="CHEBI:15377"/>
        <dbReference type="ChEBI" id="CHEBI:15378"/>
        <dbReference type="ChEBI" id="CHEBI:43474"/>
        <dbReference type="ChEBI" id="CHEBI:456215"/>
        <dbReference type="ChEBI" id="CHEBI:456216"/>
    </reaction>
</comment>
<comment type="cofactor">
    <cofactor evidence="2">
        <name>a divalent metal cation</name>
        <dbReference type="ChEBI" id="CHEBI:60240"/>
    </cofactor>
    <text evidence="2">Binds 2 divalent metal cations per subunit.</text>
</comment>
<comment type="subunit">
    <text evidence="2">Monomer cleaved in two subunits; disulfide-linked. Is synthesized as a single-chain protein and is subsequently cleaved to form a two-subunit protein held together with disulfide bonds.</text>
</comment>
<comment type="subcellular location">
    <subcellularLocation>
        <location evidence="5">Secreted</location>
    </subcellularLocation>
</comment>
<comment type="tissue specificity">
    <text evidence="7">Expressed by venom gland.</text>
</comment>
<comment type="similarity">
    <text evidence="6">Belongs to the nucleotide pyrophosphatase/phosphodiesterase family.</text>
</comment>
<dbReference type="EC" id="3.6.1.-" evidence="2"/>
<dbReference type="EMBL" id="JU173674">
    <property type="protein sequence ID" value="AFJ49200.1"/>
    <property type="molecule type" value="mRNA"/>
</dbReference>
<dbReference type="SMR" id="J3SBP3"/>
<dbReference type="GO" id="GO:0005576">
    <property type="term" value="C:extracellular region"/>
    <property type="evidence" value="ECO:0007669"/>
    <property type="project" value="UniProtKB-SubCell"/>
</dbReference>
<dbReference type="GO" id="GO:0043262">
    <property type="term" value="F:ADP phosphatase activity"/>
    <property type="evidence" value="ECO:0007669"/>
    <property type="project" value="RHEA"/>
</dbReference>
<dbReference type="GO" id="GO:0046872">
    <property type="term" value="F:metal ion binding"/>
    <property type="evidence" value="ECO:0007669"/>
    <property type="project" value="UniProtKB-KW"/>
</dbReference>
<dbReference type="GO" id="GO:0003676">
    <property type="term" value="F:nucleic acid binding"/>
    <property type="evidence" value="ECO:0007669"/>
    <property type="project" value="InterPro"/>
</dbReference>
<dbReference type="GO" id="GO:0047429">
    <property type="term" value="F:nucleoside triphosphate diphosphatase activity"/>
    <property type="evidence" value="ECO:0007669"/>
    <property type="project" value="TreeGrafter"/>
</dbReference>
<dbReference type="GO" id="GO:0090729">
    <property type="term" value="F:toxin activity"/>
    <property type="evidence" value="ECO:0007669"/>
    <property type="project" value="UniProtKB-KW"/>
</dbReference>
<dbReference type="GO" id="GO:0009143">
    <property type="term" value="P:nucleoside triphosphate catabolic process"/>
    <property type="evidence" value="ECO:0007669"/>
    <property type="project" value="TreeGrafter"/>
</dbReference>
<dbReference type="CDD" id="cd16018">
    <property type="entry name" value="Enpp"/>
    <property type="match status" value="1"/>
</dbReference>
<dbReference type="CDD" id="cd00091">
    <property type="entry name" value="NUC"/>
    <property type="match status" value="1"/>
</dbReference>
<dbReference type="FunFam" id="4.10.410.20:FF:000001">
    <property type="entry name" value="Ectonucleotide pyrophosphatase/phosphodiesterase family member 2"/>
    <property type="match status" value="1"/>
</dbReference>
<dbReference type="Gene3D" id="4.10.410.20">
    <property type="match status" value="1"/>
</dbReference>
<dbReference type="Gene3D" id="3.40.720.10">
    <property type="entry name" value="Alkaline Phosphatase, subunit A"/>
    <property type="match status" value="1"/>
</dbReference>
<dbReference type="Gene3D" id="3.40.570.10">
    <property type="entry name" value="Extracellular Endonuclease, subunit A"/>
    <property type="match status" value="1"/>
</dbReference>
<dbReference type="InterPro" id="IPR017850">
    <property type="entry name" value="Alkaline_phosphatase_core_sf"/>
</dbReference>
<dbReference type="InterPro" id="IPR044929">
    <property type="entry name" value="DNA/RNA_non-sp_Endonuclease_sf"/>
</dbReference>
<dbReference type="InterPro" id="IPR001604">
    <property type="entry name" value="Endo_G_ENPP1-like_dom"/>
</dbReference>
<dbReference type="InterPro" id="IPR020821">
    <property type="entry name" value="ENPP1-3/EXOG-like_nuc-like"/>
</dbReference>
<dbReference type="InterPro" id="IPR044925">
    <property type="entry name" value="His-Me_finger_sf"/>
</dbReference>
<dbReference type="InterPro" id="IPR002591">
    <property type="entry name" value="Phosphodiest/P_Trfase"/>
</dbReference>
<dbReference type="InterPro" id="IPR036024">
    <property type="entry name" value="Somatomedin_B-like_dom_sf"/>
</dbReference>
<dbReference type="InterPro" id="IPR001212">
    <property type="entry name" value="Somatomedin_B_dom"/>
</dbReference>
<dbReference type="PANTHER" id="PTHR10151">
    <property type="entry name" value="ECTONUCLEOTIDE PYROPHOSPHATASE/PHOSPHODIESTERASE"/>
    <property type="match status" value="1"/>
</dbReference>
<dbReference type="PANTHER" id="PTHR10151:SF107">
    <property type="entry name" value="ECTONUCLEOTIDE PYROPHOSPHATASE_PHOSPHODIESTERASE FAMILY MEMBER 3"/>
    <property type="match status" value="1"/>
</dbReference>
<dbReference type="Pfam" id="PF01223">
    <property type="entry name" value="Endonuclease_NS"/>
    <property type="match status" value="1"/>
</dbReference>
<dbReference type="Pfam" id="PF01663">
    <property type="entry name" value="Phosphodiest"/>
    <property type="match status" value="1"/>
</dbReference>
<dbReference type="Pfam" id="PF01033">
    <property type="entry name" value="Somatomedin_B"/>
    <property type="match status" value="1"/>
</dbReference>
<dbReference type="SMART" id="SM00892">
    <property type="entry name" value="Endonuclease_NS"/>
    <property type="match status" value="1"/>
</dbReference>
<dbReference type="SMART" id="SM00477">
    <property type="entry name" value="NUC"/>
    <property type="match status" value="1"/>
</dbReference>
<dbReference type="SMART" id="SM00201">
    <property type="entry name" value="SO"/>
    <property type="match status" value="1"/>
</dbReference>
<dbReference type="SUPFAM" id="SSF53649">
    <property type="entry name" value="Alkaline phosphatase-like"/>
    <property type="match status" value="1"/>
</dbReference>
<dbReference type="SUPFAM" id="SSF54060">
    <property type="entry name" value="His-Me finger endonucleases"/>
    <property type="match status" value="1"/>
</dbReference>
<dbReference type="SUPFAM" id="SSF90188">
    <property type="entry name" value="Somatomedin B domain"/>
    <property type="match status" value="1"/>
</dbReference>
<dbReference type="PROSITE" id="PS00524">
    <property type="entry name" value="SMB_1"/>
    <property type="match status" value="1"/>
</dbReference>
<dbReference type="PROSITE" id="PS50958">
    <property type="entry name" value="SMB_2"/>
    <property type="match status" value="1"/>
</dbReference>
<keyword id="KW-1015">Disulfide bond</keyword>
<keyword id="KW-0325">Glycoprotein</keyword>
<keyword id="KW-1199">Hemostasis impairing toxin</keyword>
<keyword id="KW-0378">Hydrolase</keyword>
<keyword id="KW-0479">Metal-binding</keyword>
<keyword id="KW-1201">Platelet aggregation inhibiting toxin</keyword>
<keyword id="KW-0964">Secreted</keyword>
<keyword id="KW-0732">Signal</keyword>
<keyword id="KW-0800">Toxin</keyword>
<reference key="1">
    <citation type="journal article" date="2012" name="BMC Genomics">
        <title>The venom-gland transcriptome of the eastern diamondback rattlesnake (Crotalus adamanteus).</title>
        <authorList>
            <person name="Rokyta D.R."/>
            <person name="Lemmon A.R."/>
            <person name="Margres M.J."/>
            <person name="Aronow K."/>
        </authorList>
    </citation>
    <scope>NUCLEOTIDE SEQUENCE [MRNA]</scope>
    <source>
        <tissue>Venom gland</tissue>
    </source>
</reference>
<reference key="2">
    <citation type="journal article" date="2014" name="J. Proteomics">
        <title>Linking the transcriptome and proteome to characterize the venom of the eastern diamondback rattlesnake (Crotalus adamanteus).</title>
        <authorList>
            <person name="Margres M.J."/>
            <person name="McGivern J.J."/>
            <person name="Wray K.P."/>
            <person name="Seavy M."/>
            <person name="Calvin K."/>
            <person name="Rokyta D.R."/>
        </authorList>
    </citation>
    <scope>IDENTIFICATION BY MASS SPECTROMETRY</scope>
    <scope>SUBCELLULAR LOCATION</scope>
    <source>
        <tissue>Venom</tissue>
    </source>
</reference>
<feature type="signal peptide" evidence="3">
    <location>
        <begin position="1"/>
        <end position="23"/>
    </location>
</feature>
<feature type="chain" id="PRO_0000425620" description="Venom phosphodiesterase 2">
    <location>
        <begin position="24"/>
        <end position="810"/>
    </location>
</feature>
<feature type="domain" description="SMB" evidence="4">
    <location>
        <begin position="33"/>
        <end position="77"/>
    </location>
</feature>
<feature type="active site" description="AMP-threonine intermediate" evidence="1">
    <location>
        <position position="144"/>
    </location>
</feature>
<feature type="binding site" evidence="1">
    <location>
        <position position="106"/>
    </location>
    <ligand>
        <name>a divalent metal cation</name>
        <dbReference type="ChEBI" id="CHEBI:60240"/>
        <label>2</label>
    </ligand>
</feature>
<feature type="binding site" evidence="1">
    <location>
        <position position="144"/>
    </location>
    <ligand>
        <name>a divalent metal cation</name>
        <dbReference type="ChEBI" id="CHEBI:60240"/>
        <label>2</label>
    </ligand>
</feature>
<feature type="binding site" evidence="1">
    <location>
        <position position="230"/>
    </location>
    <ligand>
        <name>AMP</name>
        <dbReference type="ChEBI" id="CHEBI:456215"/>
    </ligand>
</feature>
<feature type="binding site" evidence="1">
    <location>
        <position position="264"/>
    </location>
    <ligand>
        <name>a divalent metal cation</name>
        <dbReference type="ChEBI" id="CHEBI:60240"/>
        <label>1</label>
    </ligand>
</feature>
<feature type="binding site" evidence="1">
    <location>
        <position position="268"/>
    </location>
    <ligand>
        <name>a divalent metal cation</name>
        <dbReference type="ChEBI" id="CHEBI:60240"/>
        <label>1</label>
    </ligand>
</feature>
<feature type="binding site" evidence="1">
    <location>
        <position position="268"/>
    </location>
    <ligand>
        <name>AMP</name>
        <dbReference type="ChEBI" id="CHEBI:456215"/>
    </ligand>
</feature>
<feature type="binding site" evidence="1">
    <location>
        <position position="311"/>
    </location>
    <ligand>
        <name>a divalent metal cation</name>
        <dbReference type="ChEBI" id="CHEBI:60240"/>
        <label>2</label>
    </ligand>
</feature>
<feature type="binding site" evidence="1">
    <location>
        <position position="312"/>
    </location>
    <ligand>
        <name>a divalent metal cation</name>
        <dbReference type="ChEBI" id="CHEBI:60240"/>
        <label>2</label>
    </ligand>
</feature>
<feature type="binding site" evidence="1">
    <location>
        <position position="421"/>
    </location>
    <ligand>
        <name>a divalent metal cation</name>
        <dbReference type="ChEBI" id="CHEBI:60240"/>
        <label>1</label>
    </ligand>
</feature>
<feature type="glycosylation site" description="N-linked (GlcNAc...) asparagine" evidence="3">
    <location>
        <position position="175"/>
    </location>
</feature>
<feature type="glycosylation site" description="N-linked (GlcNAc...) asparagine" evidence="3">
    <location>
        <position position="218"/>
    </location>
</feature>
<feature type="glycosylation site" description="N-linked (GlcNAc...) asparagine" evidence="3">
    <location>
        <position position="229"/>
    </location>
</feature>
<feature type="glycosylation site" description="N-linked (GlcNAc...) asparagine" evidence="3">
    <location>
        <position position="364"/>
    </location>
</feature>
<feature type="glycosylation site" description="N-linked (GlcNAc...) asparagine" evidence="3">
    <location>
        <position position="471"/>
    </location>
</feature>
<feature type="glycosylation site" description="N-linked (GlcNAc...) asparagine" evidence="3">
    <location>
        <position position="553"/>
    </location>
</feature>
<feature type="glycosylation site" description="N-linked (GlcNAc...) asparagine" evidence="3">
    <location>
        <position position="633"/>
    </location>
</feature>
<feature type="glycosylation site" description="N-linked (GlcNAc...) asparagine" evidence="3">
    <location>
        <position position="704"/>
    </location>
</feature>
<feature type="disulfide bond" description="Alternate" evidence="1">
    <location>
        <begin position="37"/>
        <end position="54"/>
    </location>
</feature>
<feature type="disulfide bond" description="Alternate" evidence="4">
    <location>
        <begin position="37"/>
        <end position="42"/>
    </location>
</feature>
<feature type="disulfide bond" description="Alternate" evidence="1">
    <location>
        <begin position="42"/>
        <end position="72"/>
    </location>
</feature>
<feature type="disulfide bond" description="Alternate" evidence="1">
    <location>
        <begin position="52"/>
        <end position="65"/>
    </location>
</feature>
<feature type="disulfide bond" description="Alternate" evidence="4">
    <location>
        <begin position="52"/>
        <end position="54"/>
    </location>
</feature>
<feature type="disulfide bond" evidence="1">
    <location>
        <begin position="58"/>
        <end position="64"/>
    </location>
</feature>
<feature type="disulfide bond" description="Alternate" evidence="4">
    <location>
        <begin position="65"/>
        <end position="72"/>
    </location>
</feature>
<feature type="disulfide bond" evidence="1">
    <location>
        <begin position="83"/>
        <end position="129"/>
    </location>
</feature>
<feature type="disulfide bond" evidence="1">
    <location>
        <begin position="91"/>
        <end position="303"/>
    </location>
</feature>
<feature type="disulfide bond" evidence="1">
    <location>
        <begin position="319"/>
        <end position="416"/>
    </location>
</feature>
<feature type="disulfide bond" evidence="1">
    <location>
        <begin position="367"/>
        <end position="752"/>
    </location>
</feature>
<feature type="disulfide bond" evidence="1">
    <location>
        <begin position="500"/>
        <end position="558"/>
    </location>
</feature>
<feature type="disulfide bond" evidence="1">
    <location>
        <begin position="513"/>
        <end position="613"/>
    </location>
</feature>
<feature type="disulfide bond" evidence="1">
    <location>
        <begin position="515"/>
        <end position="598"/>
    </location>
</feature>
<feature type="disulfide bond" evidence="1">
    <location>
        <begin position="721"/>
        <end position="731"/>
    </location>
</feature>
<accession>J3SBP3</accession>
<evidence type="ECO:0000250" key="1">
    <source>
        <dbReference type="UniProtKB" id="A0A2D0TC04"/>
    </source>
</evidence>
<evidence type="ECO:0000250" key="2">
    <source>
        <dbReference type="UniProtKB" id="W8E7D1"/>
    </source>
</evidence>
<evidence type="ECO:0000255" key="3"/>
<evidence type="ECO:0000255" key="4">
    <source>
        <dbReference type="PROSITE-ProRule" id="PRU00350"/>
    </source>
</evidence>
<evidence type="ECO:0000269" key="5">
    <source>
    </source>
</evidence>
<evidence type="ECO:0000305" key="6"/>
<evidence type="ECO:0000305" key="7">
    <source>
    </source>
</evidence>
<protein>
    <recommendedName>
        <fullName>Venom phosphodiesterase 2</fullName>
        <shortName>PDE</shortName>
        <ecNumber evidence="2">3.6.1.-</ecNumber>
    </recommendedName>
</protein>
<sequence>MIQQKVLFISLVAVTLGLGLGLGLKESVQPQAQSWSCSKLRCGEKRIANVLCSCSDDCLEKKDCCTDYKSICKGETSWLKDKCASSGATQCPAGFEQSPLILFSMDGFRAGYLENWDSLMPNINKLKTCGTHAKYMRAVYPTKTFVNHYTIATGLYPESHGIIDNNIYDVNLNLNFSLSSSTARNPAWWGGQPIWHTATYQGLKAATYFWPGSEVKINGSYPTIFKNYNKSIPFEARVTEVLKWLDLPKAKRPDFLTLYIEEPDTTGHKYGPVSGEIIKALQMADRTLGMLMEGLKQRNLHNCVNLILLADHGMEEISCDRLEYMANYFNNVDFFMYEGPAPRIRSKNVPKDFYTFDSEGIVKNLTCRKPKQYFKAYLSKDLPKRLHYANNIRIDKVNLMVDQQWMAVRDKKFTRCKGGTHGYDNEFKSMQAIFLAHGPGFNEKNEVTSFENIEVYNLMCDLLKLKPAPNNGTHGSLNHLLKNPFYTPSPAKEQSSPLSCPFGPVPSPDVSGCKCSSITELEKVNQRLNLNNQAKTESEAHNLPYGRPQVLQNHSKYCLLHQAKYISAYSQDILMPLWSSYTIYRSTSTSVPPSASDCLRLDVRIPAAQSQTCSNYQPDLTITPGFLYPPNFNSSNFEQYDALITSNIVPMFKGFTRLWNYFHTTLIPKYARERNGLNVISGPIFDYNYDGHFDSYDTIKQHVNNTKIPIPTHYFVVLTSCENQINTPLNCLGPLKVLSFILPHRPDNSESCADTSPENLWVEERIQIHTARVRDVELLTGLNFYSGLKQPLPETLQLKTFLPIFVNPVN</sequence>
<proteinExistence type="evidence at protein level"/>
<name>PDE2_CROAD</name>